<evidence type="ECO:0000255" key="1">
    <source>
        <dbReference type="PROSITE-ProRule" id="PRU00176"/>
    </source>
</evidence>
<evidence type="ECO:0000256" key="2">
    <source>
        <dbReference type="SAM" id="MobiDB-lite"/>
    </source>
</evidence>
<evidence type="ECO:0000269" key="3">
    <source>
    </source>
</evidence>
<evidence type="ECO:0000269" key="4">
    <source>
    </source>
</evidence>
<evidence type="ECO:0000269" key="5">
    <source>
    </source>
</evidence>
<evidence type="ECO:0007744" key="6">
    <source>
    </source>
</evidence>
<evidence type="ECO:0007744" key="7">
    <source>
    </source>
</evidence>
<evidence type="ECO:0007744" key="8">
    <source>
    </source>
</evidence>
<evidence type="ECO:0007829" key="9">
    <source>
        <dbReference type="PDB" id="5SUP"/>
    </source>
</evidence>
<reference key="1">
    <citation type="journal article" date="1997" name="RNA">
        <title>YRA1, an essential Saccharomyces cerevisiae gene, encodes a novel nuclear protein with RNA annealing activity.</title>
        <authorList>
            <person name="Portman D.S."/>
            <person name="O'Connor J.P."/>
            <person name="Dreyfuss G."/>
        </authorList>
    </citation>
    <scope>NUCLEOTIDE SEQUENCE [GENOMIC DNA]</scope>
    <scope>PROTEIN SEQUENCE OF 39-53 AND 57-70</scope>
    <source>
        <strain>BJ5626</strain>
    </source>
</reference>
<reference key="2">
    <citation type="journal article" date="1997" name="Nature">
        <title>The nucleotide sequence of Saccharomyces cerevisiae chromosome IV.</title>
        <authorList>
            <person name="Jacq C."/>
            <person name="Alt-Moerbe J."/>
            <person name="Andre B."/>
            <person name="Arnold W."/>
            <person name="Bahr A."/>
            <person name="Ballesta J.P.G."/>
            <person name="Bargues M."/>
            <person name="Baron L."/>
            <person name="Becker A."/>
            <person name="Biteau N."/>
            <person name="Bloecker H."/>
            <person name="Blugeon C."/>
            <person name="Boskovic J."/>
            <person name="Brandt P."/>
            <person name="Brueckner M."/>
            <person name="Buitrago M.J."/>
            <person name="Coster F."/>
            <person name="Delaveau T."/>
            <person name="del Rey F."/>
            <person name="Dujon B."/>
            <person name="Eide L.G."/>
            <person name="Garcia-Cantalejo J.M."/>
            <person name="Goffeau A."/>
            <person name="Gomez-Peris A."/>
            <person name="Granotier C."/>
            <person name="Hanemann V."/>
            <person name="Hankeln T."/>
            <person name="Hoheisel J.D."/>
            <person name="Jaeger W."/>
            <person name="Jimenez A."/>
            <person name="Jonniaux J.-L."/>
            <person name="Kraemer C."/>
            <person name="Kuester H."/>
            <person name="Laamanen P."/>
            <person name="Legros Y."/>
            <person name="Louis E.J."/>
            <person name="Moeller-Rieker S."/>
            <person name="Monnet A."/>
            <person name="Moro M."/>
            <person name="Mueller-Auer S."/>
            <person name="Nussbaumer B."/>
            <person name="Paricio N."/>
            <person name="Paulin L."/>
            <person name="Perea J."/>
            <person name="Perez-Alonso M."/>
            <person name="Perez-Ortin J.E."/>
            <person name="Pohl T.M."/>
            <person name="Prydz H."/>
            <person name="Purnelle B."/>
            <person name="Rasmussen S.W."/>
            <person name="Remacha M.A."/>
            <person name="Revuelta J.L."/>
            <person name="Rieger M."/>
            <person name="Salom D."/>
            <person name="Saluz H.P."/>
            <person name="Saiz J.E."/>
            <person name="Saren A.-M."/>
            <person name="Schaefer M."/>
            <person name="Scharfe M."/>
            <person name="Schmidt E.R."/>
            <person name="Schneider C."/>
            <person name="Scholler P."/>
            <person name="Schwarz S."/>
            <person name="Soler-Mira A."/>
            <person name="Urrestarazu L.A."/>
            <person name="Verhasselt P."/>
            <person name="Vissers S."/>
            <person name="Voet M."/>
            <person name="Volckaert G."/>
            <person name="Wagner G."/>
            <person name="Wambutt R."/>
            <person name="Wedler E."/>
            <person name="Wedler H."/>
            <person name="Woelfl S."/>
            <person name="Harris D.E."/>
            <person name="Bowman S."/>
            <person name="Brown D."/>
            <person name="Churcher C.M."/>
            <person name="Connor R."/>
            <person name="Dedman K."/>
            <person name="Gentles S."/>
            <person name="Hamlin N."/>
            <person name="Hunt S."/>
            <person name="Jones L."/>
            <person name="McDonald S."/>
            <person name="Murphy L.D."/>
            <person name="Niblett D."/>
            <person name="Odell C."/>
            <person name="Oliver K."/>
            <person name="Rajandream M.A."/>
            <person name="Richards C."/>
            <person name="Shore L."/>
            <person name="Walsh S.V."/>
            <person name="Barrell B.G."/>
            <person name="Dietrich F.S."/>
            <person name="Mulligan J.T."/>
            <person name="Allen E."/>
            <person name="Araujo R."/>
            <person name="Aviles E."/>
            <person name="Berno A."/>
            <person name="Carpenter J."/>
            <person name="Chen E."/>
            <person name="Cherry J.M."/>
            <person name="Chung E."/>
            <person name="Duncan M."/>
            <person name="Hunicke-Smith S."/>
            <person name="Hyman R.W."/>
            <person name="Komp C."/>
            <person name="Lashkari D."/>
            <person name="Lew H."/>
            <person name="Lin D."/>
            <person name="Mosedale D."/>
            <person name="Nakahara K."/>
            <person name="Namath A."/>
            <person name="Oefner P."/>
            <person name="Oh C."/>
            <person name="Petel F.X."/>
            <person name="Roberts D."/>
            <person name="Schramm S."/>
            <person name="Schroeder M."/>
            <person name="Shogren T."/>
            <person name="Shroff N."/>
            <person name="Winant A."/>
            <person name="Yelton M.A."/>
            <person name="Botstein D."/>
            <person name="Davis R.W."/>
            <person name="Johnston M."/>
            <person name="Andrews S."/>
            <person name="Brinkman R."/>
            <person name="Cooper J."/>
            <person name="Ding H."/>
            <person name="Du Z."/>
            <person name="Favello A."/>
            <person name="Fulton L."/>
            <person name="Gattung S."/>
            <person name="Greco T."/>
            <person name="Hallsworth K."/>
            <person name="Hawkins J."/>
            <person name="Hillier L.W."/>
            <person name="Jier M."/>
            <person name="Johnson D."/>
            <person name="Johnston L."/>
            <person name="Kirsten J."/>
            <person name="Kucaba T."/>
            <person name="Langston Y."/>
            <person name="Latreille P."/>
            <person name="Le T."/>
            <person name="Mardis E."/>
            <person name="Menezes S."/>
            <person name="Miller N."/>
            <person name="Nhan M."/>
            <person name="Pauley A."/>
            <person name="Peluso D."/>
            <person name="Rifkin L."/>
            <person name="Riles L."/>
            <person name="Taich A."/>
            <person name="Trevaskis E."/>
            <person name="Vignati D."/>
            <person name="Wilcox L."/>
            <person name="Wohldman P."/>
            <person name="Vaudin M."/>
            <person name="Wilson R."/>
            <person name="Waterston R."/>
            <person name="Albermann K."/>
            <person name="Hani J."/>
            <person name="Heumann K."/>
            <person name="Kleine K."/>
            <person name="Mewes H.-W."/>
            <person name="Zollner A."/>
            <person name="Zaccaria P."/>
        </authorList>
    </citation>
    <scope>NUCLEOTIDE SEQUENCE [LARGE SCALE GENOMIC DNA]</scope>
    <source>
        <strain>ATCC 204508 / S288c</strain>
    </source>
</reference>
<reference key="3">
    <citation type="journal article" date="2014" name="G3 (Bethesda)">
        <title>The reference genome sequence of Saccharomyces cerevisiae: Then and now.</title>
        <authorList>
            <person name="Engel S.R."/>
            <person name="Dietrich F.S."/>
            <person name="Fisk D.G."/>
            <person name="Binkley G."/>
            <person name="Balakrishnan R."/>
            <person name="Costanzo M.C."/>
            <person name="Dwight S.S."/>
            <person name="Hitz B.C."/>
            <person name="Karra K."/>
            <person name="Nash R.S."/>
            <person name="Weng S."/>
            <person name="Wong E.D."/>
            <person name="Lloyd P."/>
            <person name="Skrzypek M.S."/>
            <person name="Miyasato S.R."/>
            <person name="Simison M."/>
            <person name="Cherry J.M."/>
        </authorList>
    </citation>
    <scope>GENOME REANNOTATION</scope>
    <source>
        <strain>ATCC 204508 / S288c</strain>
    </source>
</reference>
<reference key="4">
    <citation type="journal article" date="2002" name="Nature">
        <title>TREX is a conserved complex coupling transcription with messenger RNA export.</title>
        <authorList>
            <person name="Straesser K."/>
            <person name="Masuda S."/>
            <person name="Mason P."/>
            <person name="Pfannstiel J."/>
            <person name="Oppizzi M."/>
            <person name="Rodriguez-Navarro S."/>
            <person name="Rondon A.G."/>
            <person name="Aguilera A."/>
            <person name="Struhl K."/>
            <person name="Reed R."/>
            <person name="Hurt E."/>
        </authorList>
    </citation>
    <scope>IDENTIFICATION IN TREX COMPLEX</scope>
    <scope>IDENTIFICATION BY MASS SPECTROMETRY</scope>
</reference>
<reference key="5">
    <citation type="journal article" date="2003" name="Mol. Cell. Biol.">
        <title>Rds3p is required for stable U2 snRNP recruitment to the splicing apparatus.</title>
        <authorList>
            <person name="Wang Q."/>
            <person name="Rymond B.C."/>
        </authorList>
    </citation>
    <scope>INTERACTION WITH RDS3</scope>
</reference>
<reference key="6">
    <citation type="journal article" date="2005" name="Mol. Cell. Proteomics">
        <title>Quantitative phosphoproteomics applied to the yeast pheromone signaling pathway.</title>
        <authorList>
            <person name="Gruhler A."/>
            <person name="Olsen J.V."/>
            <person name="Mohammed S."/>
            <person name="Mortensen P."/>
            <person name="Faergeman N.J."/>
            <person name="Mann M."/>
            <person name="Jensen O.N."/>
        </authorList>
    </citation>
    <scope>ACETYLATION [LARGE SCALE ANALYSIS] AT SER-2</scope>
    <scope>PHOSPHORYLATION [LARGE SCALE ANALYSIS] AT SER-8</scope>
    <scope>CLEAVAGE OF INITIATOR METHIONINE [LARGE SCALE ANALYSIS]</scope>
    <scope>IDENTIFICATION BY MASS SPECTROMETRY [LARGE SCALE ANALYSIS]</scope>
    <source>
        <strain>YAL6B</strain>
    </source>
</reference>
<reference key="7">
    <citation type="journal article" date="2005" name="Yeast">
        <title>Biochemical and genetic characterization of Yra1p in budding yeast.</title>
        <authorList>
            <person name="Kashyap A.K."/>
            <person name="Schieltz D."/>
            <person name="Yates J. III"/>
            <person name="Kellogg D.R."/>
        </authorList>
    </citation>
    <scope>FUNCTION</scope>
    <scope>INTERACTION WITH YRA2</scope>
</reference>
<reference key="8">
    <citation type="journal article" date="2008" name="Mol. Cell. Proteomics">
        <title>A multidimensional chromatography technology for in-depth phosphoproteome analysis.</title>
        <authorList>
            <person name="Albuquerque C.P."/>
            <person name="Smolka M.B."/>
            <person name="Payne S.H."/>
            <person name="Bafna V."/>
            <person name="Eng J."/>
            <person name="Zhou H."/>
        </authorList>
    </citation>
    <scope>PHOSPHORYLATION [LARGE SCALE ANALYSIS] AT SER-100</scope>
    <scope>IDENTIFICATION BY MASS SPECTROMETRY [LARGE SCALE ANALYSIS]</scope>
</reference>
<reference key="9">
    <citation type="journal article" date="2012" name="Proc. Natl. Acad. Sci. U.S.A.">
        <title>N-terminal acetylome analyses and functional insights of the N-terminal acetyltransferase NatB.</title>
        <authorList>
            <person name="Van Damme P."/>
            <person name="Lasa M."/>
            <person name="Polevoda B."/>
            <person name="Gazquez C."/>
            <person name="Elosegui-Artola A."/>
            <person name="Kim D.S."/>
            <person name="De Juan-Pardo E."/>
            <person name="Demeyer K."/>
            <person name="Hole K."/>
            <person name="Larrea E."/>
            <person name="Timmerman E."/>
            <person name="Prieto J."/>
            <person name="Arnesen T."/>
            <person name="Sherman F."/>
            <person name="Gevaert K."/>
            <person name="Aldabe R."/>
        </authorList>
    </citation>
    <scope>ACETYLATION [LARGE SCALE ANALYSIS] AT SER-2</scope>
    <scope>CLEAVAGE OF INITIATOR METHIONINE [LARGE SCALE ANALYSIS]</scope>
    <scope>IDENTIFICATION BY MASS SPECTROMETRY [LARGE SCALE ANALYSIS]</scope>
</reference>
<organism>
    <name type="scientific">Saccharomyces cerevisiae (strain ATCC 204508 / S288c)</name>
    <name type="common">Baker's yeast</name>
    <dbReference type="NCBI Taxonomy" id="559292"/>
    <lineage>
        <taxon>Eukaryota</taxon>
        <taxon>Fungi</taxon>
        <taxon>Dikarya</taxon>
        <taxon>Ascomycota</taxon>
        <taxon>Saccharomycotina</taxon>
        <taxon>Saccharomycetes</taxon>
        <taxon>Saccharomycetales</taxon>
        <taxon>Saccharomycetaceae</taxon>
        <taxon>Saccharomyces</taxon>
    </lineage>
</organism>
<proteinExistence type="evidence at protein level"/>
<gene>
    <name type="primary">YRA1</name>
    <name type="ordered locus">YDR381W</name>
    <name type="ORF">D9481.2</name>
    <name type="ORF">D9509.1</name>
</gene>
<keyword id="KW-0002">3D-structure</keyword>
<keyword id="KW-0007">Acetylation</keyword>
<keyword id="KW-0903">Direct protein sequencing</keyword>
<keyword id="KW-0539">Nucleus</keyword>
<keyword id="KW-0597">Phosphoprotein</keyword>
<keyword id="KW-1185">Reference proteome</keyword>
<keyword id="KW-0694">RNA-binding</keyword>
<keyword id="KW-0804">Transcription</keyword>
<keyword id="KW-0805">Transcription regulation</keyword>
<feature type="initiator methionine" description="Removed" evidence="6 8">
    <location>
        <position position="1"/>
    </location>
</feature>
<feature type="chain" id="PRO_0000082007" description="RNA annealing protein YRA1">
    <location>
        <begin position="2"/>
        <end position="226"/>
    </location>
</feature>
<feature type="domain" description="RRM" evidence="1">
    <location>
        <begin position="78"/>
        <end position="158"/>
    </location>
</feature>
<feature type="region of interest" description="Disordered" evidence="2">
    <location>
        <begin position="1"/>
        <end position="62"/>
    </location>
</feature>
<feature type="region of interest" description="Disordered" evidence="2">
    <location>
        <begin position="173"/>
        <end position="226"/>
    </location>
</feature>
<feature type="compositionally biased region" description="Basic and acidic residues" evidence="2">
    <location>
        <begin position="208"/>
        <end position="226"/>
    </location>
</feature>
<feature type="modified residue" description="N-acetylserine" evidence="6 8">
    <location>
        <position position="2"/>
    </location>
</feature>
<feature type="modified residue" description="Phosphoserine" evidence="6">
    <location>
        <position position="8"/>
    </location>
</feature>
<feature type="modified residue" description="Phosphoserine" evidence="7">
    <location>
        <position position="100"/>
    </location>
</feature>
<feature type="helix" evidence="9">
    <location>
        <begin position="212"/>
        <end position="222"/>
    </location>
</feature>
<dbReference type="EMBL" id="U72633">
    <property type="protein sequence ID" value="AAC09951.1"/>
    <property type="molecule type" value="Genomic_DNA"/>
</dbReference>
<dbReference type="EMBL" id="U28373">
    <property type="protein sequence ID" value="AAB64817.1"/>
    <property type="molecule type" value="Genomic_DNA"/>
</dbReference>
<dbReference type="EMBL" id="U32274">
    <property type="protein sequence ID" value="AAB64823.1"/>
    <property type="molecule type" value="Genomic_DNA"/>
</dbReference>
<dbReference type="EMBL" id="BK006938">
    <property type="protein sequence ID" value="DAA12224.1"/>
    <property type="molecule type" value="Genomic_DNA"/>
</dbReference>
<dbReference type="PIR" id="S61176">
    <property type="entry name" value="S61176"/>
</dbReference>
<dbReference type="RefSeq" id="NP_010669.1">
    <property type="nucleotide sequence ID" value="NM_001180689.1"/>
</dbReference>
<dbReference type="PDB" id="5SUP">
    <property type="method" value="X-ray"/>
    <property type="resolution" value="2.60 A"/>
    <property type="chains" value="G/H/I=200-226"/>
</dbReference>
<dbReference type="PDBsum" id="5SUP"/>
<dbReference type="SMR" id="Q12159"/>
<dbReference type="BioGRID" id="32441">
    <property type="interactions" value="633"/>
</dbReference>
<dbReference type="ComplexPortal" id="CPX-1793">
    <property type="entry name" value="TREX complex"/>
</dbReference>
<dbReference type="DIP" id="DIP-1791N"/>
<dbReference type="FunCoup" id="Q12159">
    <property type="interactions" value="1401"/>
</dbReference>
<dbReference type="IntAct" id="Q12159">
    <property type="interactions" value="195"/>
</dbReference>
<dbReference type="MINT" id="Q12159"/>
<dbReference type="STRING" id="4932.YDR381W"/>
<dbReference type="TCDB" id="3.A.22.1.1">
    <property type="family name" value="the transcription-coupled trex/tap nuclear mrna export complex (trex) family"/>
</dbReference>
<dbReference type="iPTMnet" id="Q12159"/>
<dbReference type="PaxDb" id="4932-YDR381W"/>
<dbReference type="PeptideAtlas" id="Q12159"/>
<dbReference type="TopDownProteomics" id="Q12159"/>
<dbReference type="EnsemblFungi" id="YDR381W_mRNA">
    <property type="protein sequence ID" value="YDR381W"/>
    <property type="gene ID" value="YDR381W"/>
</dbReference>
<dbReference type="GeneID" id="851988"/>
<dbReference type="KEGG" id="sce:YDR381W"/>
<dbReference type="AGR" id="SGD:S000002789"/>
<dbReference type="SGD" id="S000002789">
    <property type="gene designation" value="YRA1"/>
</dbReference>
<dbReference type="VEuPathDB" id="FungiDB:YDR381W"/>
<dbReference type="eggNOG" id="KOG0533">
    <property type="taxonomic scope" value="Eukaryota"/>
</dbReference>
<dbReference type="HOGENOM" id="CLU_052367_2_1_1"/>
<dbReference type="InParanoid" id="Q12159"/>
<dbReference type="OMA" id="NEFGPIK"/>
<dbReference type="OrthoDB" id="346839at2759"/>
<dbReference type="BioCyc" id="YEAST:G3O-29929-MONOMER"/>
<dbReference type="Reactome" id="R-SCE-159236">
    <property type="pathway name" value="Transport of Mature mRNA derived from an Intron-Containing Transcript"/>
</dbReference>
<dbReference type="BioGRID-ORCS" id="851988">
    <property type="hits" value="0 hits in 10 CRISPR screens"/>
</dbReference>
<dbReference type="PRO" id="PR:Q12159"/>
<dbReference type="Proteomes" id="UP000002311">
    <property type="component" value="Chromosome IV"/>
</dbReference>
<dbReference type="RNAct" id="Q12159">
    <property type="molecule type" value="protein"/>
</dbReference>
<dbReference type="GO" id="GO:0005634">
    <property type="term" value="C:nucleus"/>
    <property type="evidence" value="ECO:0000318"/>
    <property type="project" value="GO_Central"/>
</dbReference>
<dbReference type="GO" id="GO:0000346">
    <property type="term" value="C:transcription export complex"/>
    <property type="evidence" value="ECO:0000314"/>
    <property type="project" value="SGD"/>
</dbReference>
<dbReference type="GO" id="GO:0071667">
    <property type="term" value="F:DNA/RNA hybrid binding"/>
    <property type="evidence" value="ECO:0000314"/>
    <property type="project" value="SGD"/>
</dbReference>
<dbReference type="GO" id="GO:0003729">
    <property type="term" value="F:mRNA binding"/>
    <property type="evidence" value="ECO:0000318"/>
    <property type="project" value="GO_Central"/>
</dbReference>
<dbReference type="GO" id="GO:0003723">
    <property type="term" value="F:RNA binding"/>
    <property type="evidence" value="ECO:0000314"/>
    <property type="project" value="SGD"/>
</dbReference>
<dbReference type="GO" id="GO:1990119">
    <property type="term" value="F:RNA helicase inhibitor activity"/>
    <property type="evidence" value="ECO:0000314"/>
    <property type="project" value="SGD"/>
</dbReference>
<dbReference type="GO" id="GO:0006406">
    <property type="term" value="P:mRNA export from nucleus"/>
    <property type="evidence" value="ECO:0000316"/>
    <property type="project" value="SGD"/>
</dbReference>
<dbReference type="GO" id="GO:0006368">
    <property type="term" value="P:transcription elongation by RNA polymerase II"/>
    <property type="evidence" value="ECO:0000303"/>
    <property type="project" value="ComplexPortal"/>
</dbReference>
<dbReference type="GO" id="GO:0006283">
    <property type="term" value="P:transcription-coupled nucleotide-excision repair"/>
    <property type="evidence" value="ECO:0000315"/>
    <property type="project" value="SGD"/>
</dbReference>
<dbReference type="CDD" id="cd12267">
    <property type="entry name" value="RRM_YRA1_MLO3"/>
    <property type="match status" value="1"/>
</dbReference>
<dbReference type="Gene3D" id="3.30.70.330">
    <property type="match status" value="1"/>
</dbReference>
<dbReference type="InterPro" id="IPR051229">
    <property type="entry name" value="ALYREF_mRNA_export"/>
</dbReference>
<dbReference type="InterPro" id="IPR012677">
    <property type="entry name" value="Nucleotide-bd_a/b_plait_sf"/>
</dbReference>
<dbReference type="InterPro" id="IPR035979">
    <property type="entry name" value="RBD_domain_sf"/>
</dbReference>
<dbReference type="InterPro" id="IPR000504">
    <property type="entry name" value="RRM_dom"/>
</dbReference>
<dbReference type="InterPro" id="IPR034357">
    <property type="entry name" value="Yra1/Mlo3_RRM"/>
</dbReference>
<dbReference type="PANTHER" id="PTHR19965">
    <property type="entry name" value="RNA AND EXPORT FACTOR BINDING PROTEIN"/>
    <property type="match status" value="1"/>
</dbReference>
<dbReference type="PANTHER" id="PTHR19965:SF35">
    <property type="entry name" value="RNA ANNEALING PROTEIN YRA1"/>
    <property type="match status" value="1"/>
</dbReference>
<dbReference type="Pfam" id="PF00076">
    <property type="entry name" value="RRM_1"/>
    <property type="match status" value="1"/>
</dbReference>
<dbReference type="SMART" id="SM00360">
    <property type="entry name" value="RRM"/>
    <property type="match status" value="1"/>
</dbReference>
<dbReference type="SUPFAM" id="SSF54928">
    <property type="entry name" value="RNA-binding domain, RBD"/>
    <property type="match status" value="1"/>
</dbReference>
<dbReference type="PROSITE" id="PS50102">
    <property type="entry name" value="RRM"/>
    <property type="match status" value="1"/>
</dbReference>
<name>YRA1_YEAST</name>
<protein>
    <recommendedName>
        <fullName>RNA annealing protein YRA1</fullName>
    </recommendedName>
</protein>
<sequence length="226" mass="24956">MSANLDKSLDEIIGSNKAGSNRARVGGTRGNGPRRVGKQVGSQRRSLPNRRGPIRKNTRAPPNAVARVAKLLDTTREVKVNVEGLPRDIKQDAVREFFASQVGGVQRVLLSYNERGQSTGMANITFKNGELARRAVERFNGSPIDGGRSRLRLNLIVDPNQRPVKSLADRIKAMPQKGGNAPRPVKRGPNRKAAMAKSQNKPKREKPAKKSLEDLDKEMADYFEKK</sequence>
<comment type="function">
    <text evidence="5">RNA-binding RNA annealing protein. May have a role in pre-mRNA metabolism. Component the TREX complex, which operates in coupling transcription elongation to mRNA export.</text>
</comment>
<comment type="subunit">
    <text evidence="3 4 5">Component of the transcription/export (TREX) complex, which is at least is formed of SUB2, TEX1 and YRA1 and the THO complex composed of HPR1, MFT1, THO2 and THP1. Interacts with RDS3 and YRA2.</text>
</comment>
<comment type="interaction">
    <interactant intactId="EBI-29516">
        <id>Q12159</id>
    </interactant>
    <interactant intactId="EBI-11642">
        <id>Q99257</id>
        <label>MEX67</label>
    </interactant>
    <organismsDiffer>false</organismsDiffer>
    <experiments>2</experiments>
</comment>
<comment type="interaction">
    <interactant intactId="EBI-29516">
        <id>Q12159</id>
    </interactant>
    <interactant intactId="EBI-12980">
        <id>P39081</id>
        <label>PCF11</label>
    </interactant>
    <organismsDiffer>false</organismsDiffer>
    <experiments>2</experiments>
</comment>
<comment type="interaction">
    <interactant intactId="EBI-29516">
        <id>Q12159</id>
    </interactant>
    <interactant intactId="EBI-18500">
        <id>Q07478</id>
        <label>SUB2</label>
    </interactant>
    <organismsDiffer>false</organismsDiffer>
    <experiments>5</experiments>
</comment>
<comment type="subcellular location">
    <subcellularLocation>
        <location>Nucleus</location>
    </subcellularLocation>
</comment>
<accession>Q12159</accession>
<accession>D6VT14</accession>